<feature type="chain" id="PRO_0000105530" description="Flagellar hook-basal body complex protein FliE">
    <location>
        <begin position="1"/>
        <end position="111"/>
    </location>
</feature>
<keyword id="KW-0975">Bacterial flagellum</keyword>
<keyword id="KW-1185">Reference proteome</keyword>
<dbReference type="EMBL" id="U43739">
    <property type="protein sequence ID" value="AAA85615.1"/>
    <property type="status" value="ALT_INIT"/>
    <property type="molecule type" value="Genomic_DNA"/>
</dbReference>
<dbReference type="EMBL" id="L76303">
    <property type="protein sequence ID" value="AAB51409.1"/>
    <property type="molecule type" value="Genomic_DNA"/>
</dbReference>
<dbReference type="EMBL" id="L40500">
    <property type="protein sequence ID" value="AAB04620.1"/>
    <property type="molecule type" value="Genomic_DNA"/>
</dbReference>
<dbReference type="EMBL" id="AE000783">
    <property type="protein sequence ID" value="AAC66656.1"/>
    <property type="molecule type" value="Genomic_DNA"/>
</dbReference>
<dbReference type="PIR" id="D70136">
    <property type="entry name" value="D70136"/>
</dbReference>
<dbReference type="RefSeq" id="NP_212426.1">
    <property type="nucleotide sequence ID" value="NC_001318.1"/>
</dbReference>
<dbReference type="RefSeq" id="WP_002660553.1">
    <property type="nucleotide sequence ID" value="NC_001318.1"/>
</dbReference>
<dbReference type="SMR" id="P52609"/>
<dbReference type="STRING" id="224326.BB_0292"/>
<dbReference type="PaxDb" id="224326-BB_0292"/>
<dbReference type="EnsemblBacteria" id="AAC66656">
    <property type="protein sequence ID" value="AAC66656"/>
    <property type="gene ID" value="BB_0292"/>
</dbReference>
<dbReference type="GeneID" id="56567723"/>
<dbReference type="KEGG" id="bbu:BB_0292"/>
<dbReference type="PATRIC" id="fig|224326.49.peg.691"/>
<dbReference type="HOGENOM" id="CLU_147249_4_0_12"/>
<dbReference type="OrthoDB" id="370409at2"/>
<dbReference type="Proteomes" id="UP000001807">
    <property type="component" value="Chromosome"/>
</dbReference>
<dbReference type="GO" id="GO:0009425">
    <property type="term" value="C:bacterial-type flagellum basal body"/>
    <property type="evidence" value="ECO:0007669"/>
    <property type="project" value="UniProtKB-SubCell"/>
</dbReference>
<dbReference type="GO" id="GO:0003774">
    <property type="term" value="F:cytoskeletal motor activity"/>
    <property type="evidence" value="ECO:0007669"/>
    <property type="project" value="InterPro"/>
</dbReference>
<dbReference type="GO" id="GO:0005198">
    <property type="term" value="F:structural molecule activity"/>
    <property type="evidence" value="ECO:0007669"/>
    <property type="project" value="InterPro"/>
</dbReference>
<dbReference type="GO" id="GO:0071973">
    <property type="term" value="P:bacterial-type flagellum-dependent cell motility"/>
    <property type="evidence" value="ECO:0007669"/>
    <property type="project" value="InterPro"/>
</dbReference>
<dbReference type="HAMAP" id="MF_00724">
    <property type="entry name" value="FliE"/>
    <property type="match status" value="1"/>
</dbReference>
<dbReference type="InterPro" id="IPR001624">
    <property type="entry name" value="FliE"/>
</dbReference>
<dbReference type="NCBIfam" id="TIGR00205">
    <property type="entry name" value="fliE"/>
    <property type="match status" value="1"/>
</dbReference>
<dbReference type="PANTHER" id="PTHR34653">
    <property type="match status" value="1"/>
</dbReference>
<dbReference type="PANTHER" id="PTHR34653:SF1">
    <property type="entry name" value="FLAGELLAR HOOK-BASAL BODY COMPLEX PROTEIN FLIE"/>
    <property type="match status" value="1"/>
</dbReference>
<dbReference type="Pfam" id="PF02049">
    <property type="entry name" value="FliE"/>
    <property type="match status" value="1"/>
</dbReference>
<dbReference type="PRINTS" id="PR01006">
    <property type="entry name" value="FLGHOOKFLIE"/>
</dbReference>
<name>FLIE_BORBU</name>
<proteinExistence type="inferred from homology"/>
<comment type="subcellular location">
    <subcellularLocation>
        <location evidence="1">Bacterial flagellum basal body</location>
    </subcellularLocation>
</comment>
<comment type="similarity">
    <text evidence="2">Belongs to the FliE family.</text>
</comment>
<comment type="sequence caution" evidence="2">
    <conflict type="erroneous initiation">
        <sequence resource="EMBL-CDS" id="AAA85615"/>
    </conflict>
</comment>
<evidence type="ECO:0000250" key="1"/>
<evidence type="ECO:0000305" key="2"/>
<protein>
    <recommendedName>
        <fullName>Flagellar hook-basal body complex protein FliE</fullName>
    </recommendedName>
</protein>
<sequence>MVRTDAFFTENNINLVKKNPLHFDVNLFSSKSNAKDNDIKTFKDVLINSITDVNKSQLNVSKVTEQAILKPSSIDVHDVVIAMSKANMNLSILKAVVERGVKAYQDIINIR</sequence>
<reference key="1">
    <citation type="submission" date="1995-12" db="EMBL/GenBank/DDBJ databases">
        <authorList>
            <person name="Dunn J.J."/>
            <person name="Butler-Loffredo L."/>
            <person name="Kieleczawa J."/>
            <person name="Medalle J."/>
            <person name="Luft B.J."/>
        </authorList>
    </citation>
    <scope>NUCLEOTIDE SEQUENCE [GENOMIC DNA]</scope>
    <source>
        <strain>ATCC 35210 / DSM 4680 / CIP 102532 / B31</strain>
    </source>
</reference>
<reference key="2">
    <citation type="submission" date="1996-02" db="EMBL/GenBank/DDBJ databases">
        <authorList>
            <person name="Ge Y."/>
            <person name="Saint-Girons I."/>
            <person name="Old I.G."/>
            <person name="Charon N.W."/>
        </authorList>
    </citation>
    <scope>NUCLEOTIDE SEQUENCE [GENOMIC DNA]</scope>
    <source>
        <strain>212</strain>
    </source>
</reference>
<reference key="3">
    <citation type="journal article" date="1997" name="Nature">
        <title>Genomic sequence of a Lyme disease spirochaete, Borrelia burgdorferi.</title>
        <authorList>
            <person name="Fraser C.M."/>
            <person name="Casjens S."/>
            <person name="Huang W.M."/>
            <person name="Sutton G.G."/>
            <person name="Clayton R.A."/>
            <person name="Lathigra R."/>
            <person name="White O."/>
            <person name="Ketchum K.A."/>
            <person name="Dodson R.J."/>
            <person name="Hickey E.K."/>
            <person name="Gwinn M.L."/>
            <person name="Dougherty B.A."/>
            <person name="Tomb J.-F."/>
            <person name="Fleischmann R.D."/>
            <person name="Richardson D.L."/>
            <person name="Peterson J.D."/>
            <person name="Kerlavage A.R."/>
            <person name="Quackenbush J."/>
            <person name="Salzberg S.L."/>
            <person name="Hanson M."/>
            <person name="van Vugt R."/>
            <person name="Palmer N."/>
            <person name="Adams M.D."/>
            <person name="Gocayne J.D."/>
            <person name="Weidman J.F."/>
            <person name="Utterback T.R."/>
            <person name="Watthey L."/>
            <person name="McDonald L.A."/>
            <person name="Artiach P."/>
            <person name="Bowman C."/>
            <person name="Garland S.A."/>
            <person name="Fujii C."/>
            <person name="Cotton M.D."/>
            <person name="Horst K."/>
            <person name="Roberts K.M."/>
            <person name="Hatch B."/>
            <person name="Smith H.O."/>
            <person name="Venter J.C."/>
        </authorList>
    </citation>
    <scope>NUCLEOTIDE SEQUENCE [LARGE SCALE GENOMIC DNA]</scope>
    <source>
        <strain>ATCC 35210 / DSM 4680 / CIP 102532 / B31</strain>
    </source>
</reference>
<gene>
    <name type="primary">fliE</name>
    <name type="ordered locus">BB_0292</name>
</gene>
<accession>P52609</accession>
<accession>Q57187</accession>
<organism>
    <name type="scientific">Borreliella burgdorferi (strain ATCC 35210 / DSM 4680 / CIP 102532 / B31)</name>
    <name type="common">Borrelia burgdorferi</name>
    <dbReference type="NCBI Taxonomy" id="224326"/>
    <lineage>
        <taxon>Bacteria</taxon>
        <taxon>Pseudomonadati</taxon>
        <taxon>Spirochaetota</taxon>
        <taxon>Spirochaetia</taxon>
        <taxon>Spirochaetales</taxon>
        <taxon>Borreliaceae</taxon>
        <taxon>Borreliella</taxon>
    </lineage>
</organism>